<accession>Q6NNF2</accession>
<accession>E1JGU3</accession>
<accession>Q5BI98</accession>
<accession>Q8MLR0</accession>
<accession>Q95T53</accession>
<accession>Q9W1L9</accession>
<comment type="function">
    <text evidence="1 7">Hydrolyzes the second messenger cAMP, which is a key regulator of many important physiological processes (By similarity). Involved in the positive regulation of MAP kinase signaling and in inhibiting oxidative stress-induced cell death (PubMed:23509299).</text>
</comment>
<comment type="catalytic activity">
    <reaction evidence="3">
        <text>3',5'-cyclic AMP + H2O = AMP + H(+)</text>
        <dbReference type="Rhea" id="RHEA:25277"/>
        <dbReference type="ChEBI" id="CHEBI:15377"/>
        <dbReference type="ChEBI" id="CHEBI:15378"/>
        <dbReference type="ChEBI" id="CHEBI:58165"/>
        <dbReference type="ChEBI" id="CHEBI:456215"/>
        <dbReference type="EC" id="3.1.4.53"/>
    </reaction>
</comment>
<comment type="cofactor">
    <cofactor evidence="1">
        <name>a divalent metal cation</name>
        <dbReference type="ChEBI" id="CHEBI:60240"/>
    </cofactor>
</comment>
<comment type="pathway">
    <text evidence="1">Purine metabolism; 3',5'-cyclic AMP degradation; AMP from 3',5'-cyclic AMP: step 1/1.</text>
</comment>
<comment type="alternative products">
    <event type="alternative splicing"/>
    <isoform>
        <id>Q6NNF2-1</id>
        <name evidence="13">A</name>
        <sequence type="displayed"/>
    </isoform>
    <isoform>
        <id>Q6NNF2-2</id>
        <name evidence="13">B</name>
        <sequence type="described" ref="VSP_058755"/>
    </isoform>
    <isoform>
        <id>Q6NNF2-3</id>
        <name evidence="13">C</name>
        <sequence type="described" ref="VSP_058753"/>
    </isoform>
    <isoform>
        <id>Q6NNF2-4</id>
        <name evidence="13">E</name>
        <sequence type="described" ref="VSP_058756"/>
    </isoform>
    <isoform>
        <id>Q6NNF2-5</id>
        <name evidence="13">O</name>
        <sequence type="described" ref="VSP_058754"/>
    </isoform>
</comment>
<comment type="tissue specificity">
    <text evidence="6">Expressed in Malpighian tubules and head.</text>
</comment>
<comment type="disruption phenotype">
    <text evidence="7">Basal levels of phosphorylated kinase p38a/ERK2 are decreased significantly. Increased sensitivity to oxidative stress-induced death.</text>
</comment>
<comment type="similarity">
    <text evidence="8">Belongs to the cyclic nucleotide phosphodiesterase family. PDE8 subfamily.</text>
</comment>
<protein>
    <recommendedName>
        <fullName evidence="8">High affinity cAMP-specific and IBMX-insensitive 3',5'-cyclic phosphodiesterase 8</fullName>
        <ecNumber evidence="3">3.1.4.53</ecNumber>
    </recommendedName>
    <alternativeName>
        <fullName evidence="13">Phosphodiesterase 8</fullName>
    </alternativeName>
</protein>
<evidence type="ECO:0000250" key="1">
    <source>
        <dbReference type="UniProtKB" id="O60658"/>
    </source>
</evidence>
<evidence type="ECO:0000250" key="2">
    <source>
        <dbReference type="UniProtKB" id="O76083"/>
    </source>
</evidence>
<evidence type="ECO:0000250" key="3">
    <source>
        <dbReference type="UniProtKB" id="O95263"/>
    </source>
</evidence>
<evidence type="ECO:0000255" key="4">
    <source>
        <dbReference type="PROSITE-ProRule" id="PRU01192"/>
    </source>
</evidence>
<evidence type="ECO:0000256" key="5">
    <source>
        <dbReference type="SAM" id="MobiDB-lite"/>
    </source>
</evidence>
<evidence type="ECO:0000269" key="6">
    <source>
    </source>
</evidence>
<evidence type="ECO:0000269" key="7">
    <source>
    </source>
</evidence>
<evidence type="ECO:0000305" key="8"/>
<evidence type="ECO:0000312" key="9">
    <source>
        <dbReference type="EMBL" id="AAL25366.1"/>
    </source>
</evidence>
<evidence type="ECO:0000312" key="10">
    <source>
        <dbReference type="EMBL" id="AAR96128.1"/>
    </source>
</evidence>
<evidence type="ECO:0000312" key="11">
    <source>
        <dbReference type="EMBL" id="AAX33474.1"/>
    </source>
</evidence>
<evidence type="ECO:0000312" key="12">
    <source>
        <dbReference type="EMBL" id="AEX98031.1"/>
    </source>
</evidence>
<evidence type="ECO:0000312" key="13">
    <source>
        <dbReference type="FlyBase" id="FBgn0266377"/>
    </source>
</evidence>
<evidence type="ECO:0000312" key="14">
    <source>
        <dbReference type="Proteomes" id="UP000000803"/>
    </source>
</evidence>
<feature type="chain" id="PRO_0000438862" description="High affinity cAMP-specific and IBMX-insensitive 3',5'-cyclic phosphodiesterase 8">
    <location>
        <begin position="1"/>
        <end position="914"/>
    </location>
</feature>
<feature type="domain" description="PAS" evidence="8">
    <location>
        <begin position="312"/>
        <end position="359"/>
    </location>
</feature>
<feature type="domain" description="PDEase" evidence="4">
    <location>
        <begin position="558"/>
        <end position="893"/>
    </location>
</feature>
<feature type="region of interest" description="Disordered" evidence="5">
    <location>
        <begin position="1"/>
        <end position="27"/>
    </location>
</feature>
<feature type="region of interest" description="Disordered" evidence="5">
    <location>
        <begin position="113"/>
        <end position="138"/>
    </location>
</feature>
<feature type="compositionally biased region" description="Low complexity" evidence="5">
    <location>
        <begin position="116"/>
        <end position="129"/>
    </location>
</feature>
<feature type="active site" description="Proton donor" evidence="2">
    <location>
        <position position="640"/>
    </location>
</feature>
<feature type="binding site" evidence="1">
    <location>
        <position position="644"/>
    </location>
    <ligand>
        <name>a divalent metal cation</name>
        <dbReference type="ChEBI" id="CHEBI:60240"/>
        <label>1</label>
    </ligand>
</feature>
<feature type="binding site" evidence="1">
    <location>
        <position position="682"/>
    </location>
    <ligand>
        <name>a divalent metal cation</name>
        <dbReference type="ChEBI" id="CHEBI:60240"/>
        <label>1</label>
    </ligand>
</feature>
<feature type="binding site" evidence="1">
    <location>
        <position position="683"/>
    </location>
    <ligand>
        <name>a divalent metal cation</name>
        <dbReference type="ChEBI" id="CHEBI:60240"/>
        <label>1</label>
    </ligand>
</feature>
<feature type="binding site" evidence="1">
    <location>
        <position position="683"/>
    </location>
    <ligand>
        <name>a divalent metal cation</name>
        <dbReference type="ChEBI" id="CHEBI:60240"/>
        <label>2</label>
    </ligand>
</feature>
<feature type="binding site" evidence="1">
    <location>
        <position position="799"/>
    </location>
    <ligand>
        <name>a divalent metal cation</name>
        <dbReference type="ChEBI" id="CHEBI:60240"/>
        <label>1</label>
    </ligand>
</feature>
<feature type="splice variant" id="VSP_058753" description="In isoform C." evidence="8">
    <location>
        <begin position="1"/>
        <end position="514"/>
    </location>
</feature>
<feature type="splice variant" id="VSP_058754" description="In isoform O." evidence="8">
    <original>MGCSPSTLPPAPSAGQTGERGSLPLDASEKDESRLFCIKLRRSRLRRCSCGGVTLQPPSDGNGSTAGDNLCGQVLLNPLQTKSEADYEKLSTGKKDSIVTVAALGNFTHSVVRRATGSTGTSGTSSSGGNSRPGHRKSSLALALTPEDEPMDVY</original>
    <variation>MRNCLPKFSKVFRRKSSAKSSSSSAGRENPSSEPDSDTEPYAIAIAAISDRSGDNRNERPRPLPDDDSIRSRLISAAHLDLDVGLELASDSTAVPANGGIRPKSEGACPEMKVETISAATSPPPPRPLHGTSGPVAISLPFVGRNSSKTPEEMELEYEANVEAESRDIMTPLRRNTRPLSVSFGGGGGRSALQPEIVEAIRSLDVPALRLNNLSFDGSTDPKGERNHAEEEPLTPGHDHEDSVVLRRKVNCLERKAHSLYERRLPRVPKLHLLVAGKKNPPTEEEEFRTF</variation>
    <location>
        <begin position="1"/>
        <end position="154"/>
    </location>
</feature>
<feature type="splice variant" id="VSP_058755" description="In isoform B." evidence="8">
    <original>MGCSPSTLPPAPSAGQTGERGSLPLDASEKDESRLFCIKLRRSRLRRCSCGGVTLQPPSDGNGSTAGDNLCGQVLLNPLQTKSEADYEKLSTGKKDSIVTVAALGNFTHSVVRRATGS</original>
    <variation>MIISSQPNLAGSATTTTTTTISSAHVSQEGTMPLPLPIPVTMPLPNAGTCNCGAVGVGVGVGMGMALGARQCPSPAVDPTTATATPTSTTPGRDSLTRPASESELNVG</variation>
    <location>
        <begin position="1"/>
        <end position="118"/>
    </location>
</feature>
<feature type="splice variant" id="VSP_058756" description="In isoform E." evidence="8">
    <location>
        <begin position="479"/>
        <end position="487"/>
    </location>
</feature>
<sequence length="914" mass="102052">MGCSPSTLPPAPSAGQTGERGSLPLDASEKDESRLFCIKLRRSRLRRCSCGGVTLQPPSDGNGSTAGDNLCGQVLLNPLQTKSEADYEKLSTGKKDSIVTVAALGNFTHSVVRRATGSTGTSGTSSSGGNSRPGHRKSSLALALTPEDEPMDVYQRNLMDLKYPTVLPPNPPLKALLVFHKSDSICEAITAACQRHQLDVTLVKSKEEALDTLQKSYATAQCYHLIIIDARSSKNLDAEHIARTIRHTHGHHLTTIIAVCKKSFFEKDDVLIALLDAGVNRCVAETTNLAMCSVELKQILHSIIRPHNVMSTQQALYTALHRLKEVVLITDDLLRIQYANRATERLLNMRLDEIISKQLEDIFVSDLSTISEQCKNIKEFDGILTVRRKSQEGIPMHVRVVPVACIGSAPTHLIFNFDVPGGQMDFIATLPQPKEAPRGSLHSVRRCSFDVRSIASDGLRRTSLAKLTSLPLEAPITKIINLLSQVQENCSADEARLIDKVLEFLKREGLYSPQMKEIRTDDPIATDLIGALLTGPSVYSSRRSSNDSIIRTGSSTRTAAIVPAKMKSNPIIMELLDESLSWDFDIFKLEEITDYHPLLYLGMEMFRRFDVFATLNIDENVCKAWLAVIEAHYRKSNTYHNSTHAADVMQATGAFITQLTNKDMLVMDRMEEATALIAAAAHDVDHPGRSSAFLCNSNDALAVLYNDLTVLENHHAAITFKLTLGDDKINIFKNLDKETYKSARSTIIDMILATEMTRHFEHLAKFVSVFGGEEPRDHNPQTDEETSILMRRMLIKVADVSNPARPMQFCIEWARRIAEEYFMQTDEEKQRHLPIVMPMFDRATCSIPKSQIGFIEYIIQDMMHAWESFIDMPQLITYMQINYSQWKKYDEQGVNTLAEIMAKQPPVGKMANSK</sequence>
<dbReference type="EC" id="3.1.4.53" evidence="3"/>
<dbReference type="EMBL" id="AE013599">
    <property type="protein sequence ID" value="AAF47038.3"/>
    <property type="molecule type" value="Genomic_DNA"/>
</dbReference>
<dbReference type="EMBL" id="AE013599">
    <property type="protein sequence ID" value="AAM68263.1"/>
    <property type="molecule type" value="Genomic_DNA"/>
</dbReference>
<dbReference type="EMBL" id="AE013599">
    <property type="protein sequence ID" value="AAM68265.1"/>
    <property type="molecule type" value="Genomic_DNA"/>
</dbReference>
<dbReference type="EMBL" id="AE013599">
    <property type="protein sequence ID" value="AAM68266.1"/>
    <property type="molecule type" value="Genomic_DNA"/>
</dbReference>
<dbReference type="EMBL" id="AE013599">
    <property type="protein sequence ID" value="ACZ94546.1"/>
    <property type="molecule type" value="Genomic_DNA"/>
</dbReference>
<dbReference type="EMBL" id="AE013599">
    <property type="protein sequence ID" value="ACZ94547.2"/>
    <property type="molecule type" value="Genomic_DNA"/>
</dbReference>
<dbReference type="EMBL" id="AE013599">
    <property type="protein sequence ID" value="ACZ94548.1"/>
    <property type="molecule type" value="Genomic_DNA"/>
</dbReference>
<dbReference type="EMBL" id="AY060327">
    <property type="protein sequence ID" value="AAL25366.1"/>
    <property type="molecule type" value="mRNA"/>
</dbReference>
<dbReference type="EMBL" id="BT021326">
    <property type="protein sequence ID" value="AAX33474.1"/>
    <property type="molecule type" value="mRNA"/>
</dbReference>
<dbReference type="EMBL" id="BT011336">
    <property type="protein sequence ID" value="AAR96128.1"/>
    <property type="molecule type" value="mRNA"/>
</dbReference>
<dbReference type="EMBL" id="BT133111">
    <property type="protein sequence ID" value="AEX98031.1"/>
    <property type="molecule type" value="mRNA"/>
</dbReference>
<dbReference type="RefSeq" id="NP_001163274.1">
    <molecule id="Q6NNF2-1"/>
    <property type="nucleotide sequence ID" value="NM_001169803.2"/>
</dbReference>
<dbReference type="RefSeq" id="NP_001163275.2">
    <molecule id="Q6NNF2-5"/>
    <property type="nucleotide sequence ID" value="NM_001169804.2"/>
</dbReference>
<dbReference type="RefSeq" id="NP_001163276.1">
    <molecule id="Q6NNF2-1"/>
    <property type="nucleotide sequence ID" value="NM_001169805.2"/>
</dbReference>
<dbReference type="RefSeq" id="NP_611814.3">
    <molecule id="Q6NNF2-4"/>
    <property type="nucleotide sequence ID" value="NM_137970.5"/>
</dbReference>
<dbReference type="RefSeq" id="NP_726350.1">
    <molecule id="Q6NNF2-1"/>
    <property type="nucleotide sequence ID" value="NM_166616.3"/>
</dbReference>
<dbReference type="RefSeq" id="NP_726352.1">
    <molecule id="Q6NNF2-2"/>
    <property type="nucleotide sequence ID" value="NM_166618.3"/>
</dbReference>
<dbReference type="RefSeq" id="NP_726353.1">
    <molecule id="Q6NNF2-3"/>
    <property type="nucleotide sequence ID" value="NM_166619.2"/>
</dbReference>
<dbReference type="SMR" id="Q6NNF2"/>
<dbReference type="FunCoup" id="Q6NNF2">
    <property type="interactions" value="417"/>
</dbReference>
<dbReference type="IntAct" id="Q6NNF2">
    <property type="interactions" value="6"/>
</dbReference>
<dbReference type="STRING" id="7227.FBpp0310596"/>
<dbReference type="PaxDb" id="7227-FBpp0291341"/>
<dbReference type="DNASU" id="37741"/>
<dbReference type="EnsemblMetazoa" id="FBtr0344176">
    <molecule id="Q6NNF2-3"/>
    <property type="protein sequence ID" value="FBpp0310588"/>
    <property type="gene ID" value="FBgn0266377"/>
</dbReference>
<dbReference type="EnsemblMetazoa" id="FBtr0344178">
    <molecule id="Q6NNF2-4"/>
    <property type="protein sequence ID" value="FBpp0310590"/>
    <property type="gene ID" value="FBgn0266377"/>
</dbReference>
<dbReference type="EnsemblMetazoa" id="FBtr0344179">
    <molecule id="Q6NNF2-2"/>
    <property type="protein sequence ID" value="FBpp0310591"/>
    <property type="gene ID" value="FBgn0266377"/>
</dbReference>
<dbReference type="EnsemblMetazoa" id="FBtr0344180">
    <molecule id="Q6NNF2-1"/>
    <property type="protein sequence ID" value="FBpp0310592"/>
    <property type="gene ID" value="FBgn0266377"/>
</dbReference>
<dbReference type="EnsemblMetazoa" id="FBtr0344182">
    <molecule id="Q6NNF2-1"/>
    <property type="protein sequence ID" value="FBpp0310594"/>
    <property type="gene ID" value="FBgn0266377"/>
</dbReference>
<dbReference type="EnsemblMetazoa" id="FBtr0344183">
    <molecule id="Q6NNF2-1"/>
    <property type="protein sequence ID" value="FBpp0310595"/>
    <property type="gene ID" value="FBgn0266377"/>
</dbReference>
<dbReference type="EnsemblMetazoa" id="FBtr0344184">
    <molecule id="Q6NNF2-5"/>
    <property type="protein sequence ID" value="FBpp0310596"/>
    <property type="gene ID" value="FBgn0266377"/>
</dbReference>
<dbReference type="GeneID" id="37741"/>
<dbReference type="KEGG" id="dme:Dmel_CG45019"/>
<dbReference type="UCSC" id="CG5411-RA">
    <molecule id="Q6NNF2-1"/>
    <property type="organism name" value="d. melanogaster"/>
</dbReference>
<dbReference type="UCSC" id="CG5411-RB">
    <property type="organism name" value="d. melanogaster"/>
</dbReference>
<dbReference type="UCSC" id="CG5411-RC">
    <property type="organism name" value="d. melanogaster"/>
</dbReference>
<dbReference type="UCSC" id="CG5411-RE">
    <property type="organism name" value="d. melanogaster"/>
</dbReference>
<dbReference type="AGR" id="FB:FBgn0266377"/>
<dbReference type="CTD" id="37741"/>
<dbReference type="FlyBase" id="FBgn0266377">
    <property type="gene designation" value="Pde8"/>
</dbReference>
<dbReference type="VEuPathDB" id="VectorBase:FBgn0266377"/>
<dbReference type="eggNOG" id="KOG1229">
    <property type="taxonomic scope" value="Eukaryota"/>
</dbReference>
<dbReference type="GeneTree" id="ENSGT00940000168652"/>
<dbReference type="InParanoid" id="Q6NNF2"/>
<dbReference type="OMA" id="IDHRGQR"/>
<dbReference type="OrthoDB" id="189220at2759"/>
<dbReference type="PhylomeDB" id="Q6NNF2"/>
<dbReference type="Reactome" id="R-DME-418555">
    <property type="pathway name" value="G alpha (s) signalling events"/>
</dbReference>
<dbReference type="UniPathway" id="UPA00762">
    <property type="reaction ID" value="UER00747"/>
</dbReference>
<dbReference type="BioGRID-ORCS" id="37741">
    <property type="hits" value="0 hits in 3 CRISPR screens"/>
</dbReference>
<dbReference type="ChiTaRS" id="Pde8">
    <property type="organism name" value="fly"/>
</dbReference>
<dbReference type="GenomeRNAi" id="37741"/>
<dbReference type="PRO" id="PR:Q6NNF2"/>
<dbReference type="Proteomes" id="UP000000803">
    <property type="component" value="Chromosome 2R"/>
</dbReference>
<dbReference type="Bgee" id="FBgn0266377">
    <property type="expression patterns" value="Expressed in lamina monopolar neuron L4 (Drosophila) in insect head and 209 other cell types or tissues"/>
</dbReference>
<dbReference type="ExpressionAtlas" id="Q6NNF2">
    <property type="expression patterns" value="baseline and differential"/>
</dbReference>
<dbReference type="GO" id="GO:0004115">
    <property type="term" value="F:3',5'-cyclic-AMP phosphodiesterase activity"/>
    <property type="evidence" value="ECO:0000255"/>
    <property type="project" value="FlyBase"/>
</dbReference>
<dbReference type="GO" id="GO:0047555">
    <property type="term" value="F:3',5'-cyclic-GMP phosphodiesterase activity"/>
    <property type="evidence" value="ECO:0000318"/>
    <property type="project" value="GO_Central"/>
</dbReference>
<dbReference type="GO" id="GO:0046872">
    <property type="term" value="F:metal ion binding"/>
    <property type="evidence" value="ECO:0007669"/>
    <property type="project" value="UniProtKB-KW"/>
</dbReference>
<dbReference type="GO" id="GO:0006198">
    <property type="term" value="P:cAMP catabolic process"/>
    <property type="evidence" value="ECO:0007669"/>
    <property type="project" value="UniProtKB-UniPathway"/>
</dbReference>
<dbReference type="GO" id="GO:0046058">
    <property type="term" value="P:cAMP metabolic process"/>
    <property type="evidence" value="ECO:0000255"/>
    <property type="project" value="FlyBase"/>
</dbReference>
<dbReference type="GO" id="GO:0019933">
    <property type="term" value="P:cAMP-mediated signaling"/>
    <property type="evidence" value="ECO:0000318"/>
    <property type="project" value="GO_Central"/>
</dbReference>
<dbReference type="GO" id="GO:0007498">
    <property type="term" value="P:mesoderm development"/>
    <property type="evidence" value="ECO:0000270"/>
    <property type="project" value="FlyBase"/>
</dbReference>
<dbReference type="GO" id="GO:0070374">
    <property type="term" value="P:positive regulation of ERK1 and ERK2 cascade"/>
    <property type="evidence" value="ECO:0000315"/>
    <property type="project" value="UniProtKB"/>
</dbReference>
<dbReference type="CDD" id="cd00077">
    <property type="entry name" value="HDc"/>
    <property type="match status" value="1"/>
</dbReference>
<dbReference type="CDD" id="cd00130">
    <property type="entry name" value="PAS"/>
    <property type="match status" value="1"/>
</dbReference>
<dbReference type="FunFam" id="3.30.450.20:FF:000096">
    <property type="entry name" value="High affinity cAMP-specific and IBMX-insensitive 3',5'-cyclic phosphodiesterase 8"/>
    <property type="match status" value="1"/>
</dbReference>
<dbReference type="FunFam" id="1.10.1300.10:FF:000002">
    <property type="entry name" value="Phosphodiesterase"/>
    <property type="match status" value="1"/>
</dbReference>
<dbReference type="FunFam" id="3.40.50.2300:FF:000555">
    <property type="entry name" value="Phosphodiesterase 8, isoform D"/>
    <property type="match status" value="1"/>
</dbReference>
<dbReference type="Gene3D" id="3.40.50.2300">
    <property type="match status" value="1"/>
</dbReference>
<dbReference type="Gene3D" id="1.10.1300.10">
    <property type="entry name" value="3'5'-cyclic nucleotide phosphodiesterase, catalytic domain"/>
    <property type="match status" value="1"/>
</dbReference>
<dbReference type="Gene3D" id="3.30.450.20">
    <property type="entry name" value="PAS domain"/>
    <property type="match status" value="1"/>
</dbReference>
<dbReference type="InterPro" id="IPR003607">
    <property type="entry name" value="HD/PDEase_dom"/>
</dbReference>
<dbReference type="InterPro" id="IPR000014">
    <property type="entry name" value="PAS"/>
</dbReference>
<dbReference type="InterPro" id="IPR035965">
    <property type="entry name" value="PAS-like_dom_sf"/>
</dbReference>
<dbReference type="InterPro" id="IPR023088">
    <property type="entry name" value="PDEase"/>
</dbReference>
<dbReference type="InterPro" id="IPR002073">
    <property type="entry name" value="PDEase_catalytic_dom"/>
</dbReference>
<dbReference type="InterPro" id="IPR036971">
    <property type="entry name" value="PDEase_catalytic_dom_sf"/>
</dbReference>
<dbReference type="PANTHER" id="PTHR11347">
    <property type="entry name" value="CYCLIC NUCLEOTIDE PHOSPHODIESTERASE"/>
    <property type="match status" value="1"/>
</dbReference>
<dbReference type="Pfam" id="PF13426">
    <property type="entry name" value="PAS_9"/>
    <property type="match status" value="1"/>
</dbReference>
<dbReference type="Pfam" id="PF23198">
    <property type="entry name" value="PDE8A_N"/>
    <property type="match status" value="1"/>
</dbReference>
<dbReference type="Pfam" id="PF00233">
    <property type="entry name" value="PDEase_I"/>
    <property type="match status" value="1"/>
</dbReference>
<dbReference type="PRINTS" id="PR00387">
    <property type="entry name" value="PDIESTERASE1"/>
</dbReference>
<dbReference type="SMART" id="SM00471">
    <property type="entry name" value="HDc"/>
    <property type="match status" value="1"/>
</dbReference>
<dbReference type="SUPFAM" id="SSF109604">
    <property type="entry name" value="HD-domain/PDEase-like"/>
    <property type="match status" value="1"/>
</dbReference>
<dbReference type="SUPFAM" id="SSF55785">
    <property type="entry name" value="PYP-like sensor domain (PAS domain)"/>
    <property type="match status" value="1"/>
</dbReference>
<dbReference type="PROSITE" id="PS50112">
    <property type="entry name" value="PAS"/>
    <property type="match status" value="1"/>
</dbReference>
<dbReference type="PROSITE" id="PS51845">
    <property type="entry name" value="PDEASE_I_2"/>
    <property type="match status" value="1"/>
</dbReference>
<name>PDE8_DROME</name>
<reference evidence="14" key="1">
    <citation type="journal article" date="2000" name="Science">
        <title>The genome sequence of Drosophila melanogaster.</title>
        <authorList>
            <person name="Adams M.D."/>
            <person name="Celniker S.E."/>
            <person name="Holt R.A."/>
            <person name="Evans C.A."/>
            <person name="Gocayne J.D."/>
            <person name="Amanatides P.G."/>
            <person name="Scherer S.E."/>
            <person name="Li P.W."/>
            <person name="Hoskins R.A."/>
            <person name="Galle R.F."/>
            <person name="George R.A."/>
            <person name="Lewis S.E."/>
            <person name="Richards S."/>
            <person name="Ashburner M."/>
            <person name="Henderson S.N."/>
            <person name="Sutton G.G."/>
            <person name="Wortman J.R."/>
            <person name="Yandell M.D."/>
            <person name="Zhang Q."/>
            <person name="Chen L.X."/>
            <person name="Brandon R.C."/>
            <person name="Rogers Y.-H.C."/>
            <person name="Blazej R.G."/>
            <person name="Champe M."/>
            <person name="Pfeiffer B.D."/>
            <person name="Wan K.H."/>
            <person name="Doyle C."/>
            <person name="Baxter E.G."/>
            <person name="Helt G."/>
            <person name="Nelson C.R."/>
            <person name="Miklos G.L.G."/>
            <person name="Abril J.F."/>
            <person name="Agbayani A."/>
            <person name="An H.-J."/>
            <person name="Andrews-Pfannkoch C."/>
            <person name="Baldwin D."/>
            <person name="Ballew R.M."/>
            <person name="Basu A."/>
            <person name="Baxendale J."/>
            <person name="Bayraktaroglu L."/>
            <person name="Beasley E.M."/>
            <person name="Beeson K.Y."/>
            <person name="Benos P.V."/>
            <person name="Berman B.P."/>
            <person name="Bhandari D."/>
            <person name="Bolshakov S."/>
            <person name="Borkova D."/>
            <person name="Botchan M.R."/>
            <person name="Bouck J."/>
            <person name="Brokstein P."/>
            <person name="Brottier P."/>
            <person name="Burtis K.C."/>
            <person name="Busam D.A."/>
            <person name="Butler H."/>
            <person name="Cadieu E."/>
            <person name="Center A."/>
            <person name="Chandra I."/>
            <person name="Cherry J.M."/>
            <person name="Cawley S."/>
            <person name="Dahlke C."/>
            <person name="Davenport L.B."/>
            <person name="Davies P."/>
            <person name="de Pablos B."/>
            <person name="Delcher A."/>
            <person name="Deng Z."/>
            <person name="Mays A.D."/>
            <person name="Dew I."/>
            <person name="Dietz S.M."/>
            <person name="Dodson K."/>
            <person name="Doup L.E."/>
            <person name="Downes M."/>
            <person name="Dugan-Rocha S."/>
            <person name="Dunkov B.C."/>
            <person name="Dunn P."/>
            <person name="Durbin K.J."/>
            <person name="Evangelista C.C."/>
            <person name="Ferraz C."/>
            <person name="Ferriera S."/>
            <person name="Fleischmann W."/>
            <person name="Fosler C."/>
            <person name="Gabrielian A.E."/>
            <person name="Garg N.S."/>
            <person name="Gelbart W.M."/>
            <person name="Glasser K."/>
            <person name="Glodek A."/>
            <person name="Gong F."/>
            <person name="Gorrell J.H."/>
            <person name="Gu Z."/>
            <person name="Guan P."/>
            <person name="Harris M."/>
            <person name="Harris N.L."/>
            <person name="Harvey D.A."/>
            <person name="Heiman T.J."/>
            <person name="Hernandez J.R."/>
            <person name="Houck J."/>
            <person name="Hostin D."/>
            <person name="Houston K.A."/>
            <person name="Howland T.J."/>
            <person name="Wei M.-H."/>
            <person name="Ibegwam C."/>
            <person name="Jalali M."/>
            <person name="Kalush F."/>
            <person name="Karpen G.H."/>
            <person name="Ke Z."/>
            <person name="Kennison J.A."/>
            <person name="Ketchum K.A."/>
            <person name="Kimmel B.E."/>
            <person name="Kodira C.D."/>
            <person name="Kraft C.L."/>
            <person name="Kravitz S."/>
            <person name="Kulp D."/>
            <person name="Lai Z."/>
            <person name="Lasko P."/>
            <person name="Lei Y."/>
            <person name="Levitsky A.A."/>
            <person name="Li J.H."/>
            <person name="Li Z."/>
            <person name="Liang Y."/>
            <person name="Lin X."/>
            <person name="Liu X."/>
            <person name="Mattei B."/>
            <person name="McIntosh T.C."/>
            <person name="McLeod M.P."/>
            <person name="McPherson D."/>
            <person name="Merkulov G."/>
            <person name="Milshina N.V."/>
            <person name="Mobarry C."/>
            <person name="Morris J."/>
            <person name="Moshrefi A."/>
            <person name="Mount S.M."/>
            <person name="Moy M."/>
            <person name="Murphy B."/>
            <person name="Murphy L."/>
            <person name="Muzny D.M."/>
            <person name="Nelson D.L."/>
            <person name="Nelson D.R."/>
            <person name="Nelson K.A."/>
            <person name="Nixon K."/>
            <person name="Nusskern D.R."/>
            <person name="Pacleb J.M."/>
            <person name="Palazzolo M."/>
            <person name="Pittman G.S."/>
            <person name="Pan S."/>
            <person name="Pollard J."/>
            <person name="Puri V."/>
            <person name="Reese M.G."/>
            <person name="Reinert K."/>
            <person name="Remington K."/>
            <person name="Saunders R.D.C."/>
            <person name="Scheeler F."/>
            <person name="Shen H."/>
            <person name="Shue B.C."/>
            <person name="Siden-Kiamos I."/>
            <person name="Simpson M."/>
            <person name="Skupski M.P."/>
            <person name="Smith T.J."/>
            <person name="Spier E."/>
            <person name="Spradling A.C."/>
            <person name="Stapleton M."/>
            <person name="Strong R."/>
            <person name="Sun E."/>
            <person name="Svirskas R."/>
            <person name="Tector C."/>
            <person name="Turner R."/>
            <person name="Venter E."/>
            <person name="Wang A.H."/>
            <person name="Wang X."/>
            <person name="Wang Z.-Y."/>
            <person name="Wassarman D.A."/>
            <person name="Weinstock G.M."/>
            <person name="Weissenbach J."/>
            <person name="Williams S.M."/>
            <person name="Woodage T."/>
            <person name="Worley K.C."/>
            <person name="Wu D."/>
            <person name="Yang S."/>
            <person name="Yao Q.A."/>
            <person name="Ye J."/>
            <person name="Yeh R.-F."/>
            <person name="Zaveri J.S."/>
            <person name="Zhan M."/>
            <person name="Zhang G."/>
            <person name="Zhao Q."/>
            <person name="Zheng L."/>
            <person name="Zheng X.H."/>
            <person name="Zhong F.N."/>
            <person name="Zhong W."/>
            <person name="Zhou X."/>
            <person name="Zhu S.C."/>
            <person name="Zhu X."/>
            <person name="Smith H.O."/>
            <person name="Gibbs R.A."/>
            <person name="Myers E.W."/>
            <person name="Rubin G.M."/>
            <person name="Venter J.C."/>
        </authorList>
    </citation>
    <scope>NUCLEOTIDE SEQUENCE [LARGE SCALE GENOMIC DNA]</scope>
    <source>
        <strain evidence="14">Berkeley</strain>
    </source>
</reference>
<reference evidence="14" key="2">
    <citation type="journal article" date="2002" name="Genome Biol.">
        <title>Annotation of the Drosophila melanogaster euchromatic genome: a systematic review.</title>
        <authorList>
            <person name="Misra S."/>
            <person name="Crosby M.A."/>
            <person name="Mungall C.J."/>
            <person name="Matthews B.B."/>
            <person name="Campbell K.S."/>
            <person name="Hradecky P."/>
            <person name="Huang Y."/>
            <person name="Kaminker J.S."/>
            <person name="Millburn G.H."/>
            <person name="Prochnik S.E."/>
            <person name="Smith C.D."/>
            <person name="Tupy J.L."/>
            <person name="Whitfield E.J."/>
            <person name="Bayraktaroglu L."/>
            <person name="Berman B.P."/>
            <person name="Bettencourt B.R."/>
            <person name="Celniker S.E."/>
            <person name="de Grey A.D.N.J."/>
            <person name="Drysdale R.A."/>
            <person name="Harris N.L."/>
            <person name="Richter J."/>
            <person name="Russo S."/>
            <person name="Schroeder A.J."/>
            <person name="Shu S.Q."/>
            <person name="Stapleton M."/>
            <person name="Yamada C."/>
            <person name="Ashburner M."/>
            <person name="Gelbart W.M."/>
            <person name="Rubin G.M."/>
            <person name="Lewis S.E."/>
        </authorList>
    </citation>
    <scope>GENOME REANNOTATION</scope>
    <source>
        <strain evidence="14">Berkeley</strain>
    </source>
</reference>
<reference evidence="9" key="3">
    <citation type="journal article" date="2002" name="Genome Biol.">
        <title>A Drosophila full-length cDNA resource.</title>
        <authorList>
            <person name="Stapleton M."/>
            <person name="Carlson J.W."/>
            <person name="Brokstein P."/>
            <person name="Yu C."/>
            <person name="Champe M."/>
            <person name="George R.A."/>
            <person name="Guarin H."/>
            <person name="Kronmiller B."/>
            <person name="Pacleb J.M."/>
            <person name="Park S."/>
            <person name="Wan K.H."/>
            <person name="Rubin G.M."/>
            <person name="Celniker S.E."/>
        </authorList>
    </citation>
    <scope>NUCLEOTIDE SEQUENCE [LARGE SCALE MRNA] (ISOFORM C)</scope>
    <source>
        <strain evidence="9">Berkeley</strain>
        <tissue evidence="9">Head</tissue>
    </source>
</reference>
<reference evidence="10 11 12" key="4">
    <citation type="submission" date="2012-01" db="EMBL/GenBank/DDBJ databases">
        <authorList>
            <person name="Stapleton M."/>
            <person name="Carlson J."/>
            <person name="Chavez C."/>
            <person name="George R."/>
            <person name="Pacleb J."/>
            <person name="Rubin G.M."/>
            <person name="Booth B."/>
            <person name="Frise E."/>
            <person name="Park S."/>
            <person name="Wan K."/>
            <person name="Yu C."/>
            <person name="Celniker S."/>
        </authorList>
    </citation>
    <scope>NUCLEOTIDE SEQUENCE [LARGE SCALE MRNA] (ISOFORMS A; B AND E)</scope>
    <source>
        <strain evidence="10 11 12">Berkeley</strain>
        <tissue evidence="10 11">Embryo</tissue>
    </source>
</reference>
<reference evidence="8" key="5">
    <citation type="journal article" date="2005" name="Biochem. J.">
        <title>Cyclic nucleotide phosphodiesterases in Drosophila melanogaster.</title>
        <authorList>
            <person name="Day J.P."/>
            <person name="Dow J.A.T."/>
            <person name="Houslay M.D."/>
            <person name="Davies S.A."/>
        </authorList>
    </citation>
    <scope>TISSUE SPECIFICITY</scope>
</reference>
<reference evidence="8" key="6">
    <citation type="journal article" date="2013" name="Proc. Natl. Acad. Sci. U.S.A.">
        <title>Phosphodiesterase-8A binds to and regulates Raf-1 kinase.</title>
        <authorList>
            <person name="Brown K.M."/>
            <person name="Day J.P."/>
            <person name="Huston E."/>
            <person name="Zimmermann B."/>
            <person name="Hampel K."/>
            <person name="Christian F."/>
            <person name="Romano D."/>
            <person name="Terhzaz S."/>
            <person name="Lee L.C."/>
            <person name="Willis M.J."/>
            <person name="Morton D.B."/>
            <person name="Beavo J.A."/>
            <person name="Shimizu-Albergine M."/>
            <person name="Davies S.A."/>
            <person name="Kolch W."/>
            <person name="Houslay M.D."/>
            <person name="Baillie G.S."/>
        </authorList>
    </citation>
    <scope>FUNCTION</scope>
    <scope>DISRUPTION PHENOTYPE</scope>
</reference>
<keyword id="KW-0025">Alternative splicing</keyword>
<keyword id="KW-0114">cAMP</keyword>
<keyword id="KW-0378">Hydrolase</keyword>
<keyword id="KW-0479">Metal-binding</keyword>
<keyword id="KW-1185">Reference proteome</keyword>
<proteinExistence type="evidence at transcript level"/>
<organism evidence="14">
    <name type="scientific">Drosophila melanogaster</name>
    <name type="common">Fruit fly</name>
    <dbReference type="NCBI Taxonomy" id="7227"/>
    <lineage>
        <taxon>Eukaryota</taxon>
        <taxon>Metazoa</taxon>
        <taxon>Ecdysozoa</taxon>
        <taxon>Arthropoda</taxon>
        <taxon>Hexapoda</taxon>
        <taxon>Insecta</taxon>
        <taxon>Pterygota</taxon>
        <taxon>Neoptera</taxon>
        <taxon>Endopterygota</taxon>
        <taxon>Diptera</taxon>
        <taxon>Brachycera</taxon>
        <taxon>Muscomorpha</taxon>
        <taxon>Ephydroidea</taxon>
        <taxon>Drosophilidae</taxon>
        <taxon>Drosophila</taxon>
        <taxon>Sophophora</taxon>
    </lineage>
</organism>
<gene>
    <name evidence="13" type="primary">Pde8</name>
    <name evidence="13" type="ORF">CG45019</name>
    <name evidence="10" type="ORF">CG5411</name>
</gene>